<organism>
    <name type="scientific">Shigella dysenteriae serotype 1 (strain Sd197)</name>
    <dbReference type="NCBI Taxonomy" id="300267"/>
    <lineage>
        <taxon>Bacteria</taxon>
        <taxon>Pseudomonadati</taxon>
        <taxon>Pseudomonadota</taxon>
        <taxon>Gammaproteobacteria</taxon>
        <taxon>Enterobacterales</taxon>
        <taxon>Enterobacteriaceae</taxon>
        <taxon>Shigella</taxon>
    </lineage>
</organism>
<dbReference type="EC" id="3.5.3.23" evidence="1"/>
<dbReference type="EMBL" id="CP000034">
    <property type="protein sequence ID" value="ABB61668.1"/>
    <property type="status" value="ALT_INIT"/>
    <property type="molecule type" value="Genomic_DNA"/>
</dbReference>
<dbReference type="RefSeq" id="WP_011378707.1">
    <property type="nucleotide sequence ID" value="NC_007606.1"/>
</dbReference>
<dbReference type="RefSeq" id="YP_403159.2">
    <property type="nucleotide sequence ID" value="NC_007606.1"/>
</dbReference>
<dbReference type="SMR" id="Q32G87"/>
<dbReference type="STRING" id="300267.SDY_1532"/>
<dbReference type="EnsemblBacteria" id="ABB61668">
    <property type="protein sequence ID" value="ABB61668"/>
    <property type="gene ID" value="SDY_1532"/>
</dbReference>
<dbReference type="KEGG" id="sdy:SDY_1532"/>
<dbReference type="PATRIC" id="fig|300267.13.peg.1835"/>
<dbReference type="HOGENOM" id="CLU_053835_0_0_6"/>
<dbReference type="UniPathway" id="UPA00185">
    <property type="reaction ID" value="UER00280"/>
</dbReference>
<dbReference type="Proteomes" id="UP000002716">
    <property type="component" value="Chromosome"/>
</dbReference>
<dbReference type="GO" id="GO:0009015">
    <property type="term" value="F:N-succinylarginine dihydrolase activity"/>
    <property type="evidence" value="ECO:0007669"/>
    <property type="project" value="UniProtKB-UniRule"/>
</dbReference>
<dbReference type="GO" id="GO:0019544">
    <property type="term" value="P:arginine catabolic process to glutamate"/>
    <property type="evidence" value="ECO:0007669"/>
    <property type="project" value="UniProtKB-UniRule"/>
</dbReference>
<dbReference type="GO" id="GO:0019545">
    <property type="term" value="P:arginine catabolic process to succinate"/>
    <property type="evidence" value="ECO:0007669"/>
    <property type="project" value="UniProtKB-UniRule"/>
</dbReference>
<dbReference type="FunFam" id="3.75.10.20:FF:000001">
    <property type="entry name" value="N-succinylarginine dihydrolase"/>
    <property type="match status" value="1"/>
</dbReference>
<dbReference type="Gene3D" id="3.75.10.20">
    <property type="entry name" value="Succinylarginine dihydrolase"/>
    <property type="match status" value="1"/>
</dbReference>
<dbReference type="HAMAP" id="MF_01172">
    <property type="entry name" value="AstB"/>
    <property type="match status" value="1"/>
</dbReference>
<dbReference type="InterPro" id="IPR037031">
    <property type="entry name" value="AstB_sf"/>
</dbReference>
<dbReference type="InterPro" id="IPR007079">
    <property type="entry name" value="SuccinylArg_d-Hdrlase_AstB"/>
</dbReference>
<dbReference type="NCBIfam" id="TIGR03241">
    <property type="entry name" value="arg_catab_astB"/>
    <property type="match status" value="1"/>
</dbReference>
<dbReference type="NCBIfam" id="NF009789">
    <property type="entry name" value="PRK13281.1"/>
    <property type="match status" value="1"/>
</dbReference>
<dbReference type="PANTHER" id="PTHR30420">
    <property type="entry name" value="N-SUCCINYLARGININE DIHYDROLASE"/>
    <property type="match status" value="1"/>
</dbReference>
<dbReference type="PANTHER" id="PTHR30420:SF2">
    <property type="entry name" value="N-SUCCINYLARGININE DIHYDROLASE"/>
    <property type="match status" value="1"/>
</dbReference>
<dbReference type="Pfam" id="PF04996">
    <property type="entry name" value="AstB"/>
    <property type="match status" value="1"/>
</dbReference>
<dbReference type="SUPFAM" id="SSF55909">
    <property type="entry name" value="Pentein"/>
    <property type="match status" value="1"/>
</dbReference>
<accession>Q32G87</accession>
<comment type="function">
    <text evidence="1">Catalyzes the hydrolysis of N(2)-succinylarginine into N(2)-succinylornithine, ammonia and CO(2).</text>
</comment>
<comment type="catalytic activity">
    <reaction evidence="1">
        <text>N(2)-succinyl-L-arginine + 2 H2O + 2 H(+) = N(2)-succinyl-L-ornithine + 2 NH4(+) + CO2</text>
        <dbReference type="Rhea" id="RHEA:19533"/>
        <dbReference type="ChEBI" id="CHEBI:15377"/>
        <dbReference type="ChEBI" id="CHEBI:15378"/>
        <dbReference type="ChEBI" id="CHEBI:16526"/>
        <dbReference type="ChEBI" id="CHEBI:28938"/>
        <dbReference type="ChEBI" id="CHEBI:58241"/>
        <dbReference type="ChEBI" id="CHEBI:58514"/>
        <dbReference type="EC" id="3.5.3.23"/>
    </reaction>
</comment>
<comment type="pathway">
    <text evidence="1">Amino-acid degradation; L-arginine degradation via AST pathway; L-glutamate and succinate from L-arginine: step 2/5.</text>
</comment>
<comment type="subunit">
    <text evidence="1">Homodimer.</text>
</comment>
<comment type="similarity">
    <text evidence="1">Belongs to the succinylarginine dihydrolase family.</text>
</comment>
<comment type="sequence caution" evidence="2">
    <conflict type="erroneous initiation">
        <sequence resource="EMBL-CDS" id="ABB61668"/>
    </conflict>
</comment>
<name>ASTB_SHIDS</name>
<protein>
    <recommendedName>
        <fullName evidence="1">N-succinylarginine dihydrolase</fullName>
        <ecNumber evidence="1">3.5.3.23</ecNumber>
    </recommendedName>
</protein>
<evidence type="ECO:0000255" key="1">
    <source>
        <dbReference type="HAMAP-Rule" id="MF_01172"/>
    </source>
</evidence>
<evidence type="ECO:0000305" key="2"/>
<feature type="chain" id="PRO_0000262378" description="N-succinylarginine dihydrolase">
    <location>
        <begin position="1"/>
        <end position="448"/>
    </location>
</feature>
<feature type="active site" evidence="1">
    <location>
        <position position="175"/>
    </location>
</feature>
<feature type="active site" evidence="1">
    <location>
        <position position="249"/>
    </location>
</feature>
<feature type="active site" description="Nucleophile" evidence="1">
    <location>
        <position position="366"/>
    </location>
</feature>
<feature type="binding site" evidence="1">
    <location>
        <begin position="20"/>
        <end position="29"/>
    </location>
    <ligand>
        <name>substrate</name>
    </ligand>
</feature>
<feature type="binding site" evidence="1">
    <location>
        <position position="111"/>
    </location>
    <ligand>
        <name>substrate</name>
    </ligand>
</feature>
<feature type="binding site" evidence="1">
    <location>
        <begin position="138"/>
        <end position="139"/>
    </location>
    <ligand>
        <name>substrate</name>
    </ligand>
</feature>
<feature type="binding site" evidence="1">
    <location>
        <position position="213"/>
    </location>
    <ligand>
        <name>substrate</name>
    </ligand>
</feature>
<feature type="binding site" evidence="1">
    <location>
        <position position="251"/>
    </location>
    <ligand>
        <name>substrate</name>
    </ligand>
</feature>
<feature type="binding site" evidence="1">
    <location>
        <position position="360"/>
    </location>
    <ligand>
        <name>substrate</name>
    </ligand>
</feature>
<proteinExistence type="inferred from homology"/>
<reference key="1">
    <citation type="journal article" date="2005" name="Nucleic Acids Res.">
        <title>Genome dynamics and diversity of Shigella species, the etiologic agents of bacillary dysentery.</title>
        <authorList>
            <person name="Yang F."/>
            <person name="Yang J."/>
            <person name="Zhang X."/>
            <person name="Chen L."/>
            <person name="Jiang Y."/>
            <person name="Yan Y."/>
            <person name="Tang X."/>
            <person name="Wang J."/>
            <person name="Xiong Z."/>
            <person name="Dong J."/>
            <person name="Xue Y."/>
            <person name="Zhu Y."/>
            <person name="Xu X."/>
            <person name="Sun L."/>
            <person name="Chen S."/>
            <person name="Nie H."/>
            <person name="Peng J."/>
            <person name="Xu J."/>
            <person name="Wang Y."/>
            <person name="Yuan Z."/>
            <person name="Wen Y."/>
            <person name="Yao Z."/>
            <person name="Shen Y."/>
            <person name="Qiang B."/>
            <person name="Hou Y."/>
            <person name="Yu J."/>
            <person name="Jin Q."/>
        </authorList>
    </citation>
    <scope>NUCLEOTIDE SEQUENCE [LARGE SCALE GENOMIC DNA]</scope>
    <source>
        <strain>Sd197</strain>
    </source>
</reference>
<gene>
    <name evidence="1" type="primary">astB</name>
    <name type="ordered locus">SDY_1532</name>
</gene>
<keyword id="KW-0056">Arginine metabolism</keyword>
<keyword id="KW-0378">Hydrolase</keyword>
<keyword id="KW-1185">Reference proteome</keyword>
<sequence length="448" mass="49589">MRNAWEVNFDGLVGLTHNYAGLLFGNEASTRHRFQVSNPRLAAKQGLLKMKNLADAGFPQAVIPPHERPFIPVLRQLGFSGSDEQVLEKVARQAPHWLSSVSSASPMWVANAATIAPSVDTLDGKVHRTVANLNNKFHRSLEAPVTESLLKAIFNDEEKFSVHSALPQVALLGDEGAANHNRLGGHYGEPGMQLFVYGREKGNDTRPSRYPARQTREASEAVARLNQVNPQQVIFAQQNPDVIDQGVFHNDVIAVSNRQVLFCHQQAFARQSQLLANLRARVNGFMAIEVPATQVSVSDAVSTYLFNSQLLSRDDGSMMLVLPQECREHAGVWCYLNELLAADNPISELKVFDLRESMANGGGPACLRLRVVLTEEERRAVNPAVMMNDTLFNALNDWGDRYYRDRLTDADLADPQLLREGREALDVLSQLLNLGSVYPFQREGGGNG</sequence>